<organism>
    <name type="scientific">Drosophila willistoni</name>
    <name type="common">Fruit fly</name>
    <dbReference type="NCBI Taxonomy" id="7260"/>
    <lineage>
        <taxon>Eukaryota</taxon>
        <taxon>Metazoa</taxon>
        <taxon>Ecdysozoa</taxon>
        <taxon>Arthropoda</taxon>
        <taxon>Hexapoda</taxon>
        <taxon>Insecta</taxon>
        <taxon>Pterygota</taxon>
        <taxon>Neoptera</taxon>
        <taxon>Endopterygota</taxon>
        <taxon>Diptera</taxon>
        <taxon>Brachycera</taxon>
        <taxon>Muscomorpha</taxon>
        <taxon>Ephydroidea</taxon>
        <taxon>Drosophilidae</taxon>
        <taxon>Drosophila</taxon>
        <taxon>Sophophora</taxon>
    </lineage>
</organism>
<name>NOL6_DROWI</name>
<dbReference type="EMBL" id="CH964272">
    <property type="protein sequence ID" value="EDW83743.1"/>
    <property type="molecule type" value="Genomic_DNA"/>
</dbReference>
<dbReference type="SMR" id="B4NIM9"/>
<dbReference type="STRING" id="7260.B4NIM9"/>
<dbReference type="EnsemblMetazoa" id="FBtr0244164">
    <property type="protein sequence ID" value="FBpp0242656"/>
    <property type="gene ID" value="FBgn0215521"/>
</dbReference>
<dbReference type="EnsemblMetazoa" id="XM_002072721.4">
    <property type="protein sequence ID" value="XP_002072757.1"/>
    <property type="gene ID" value="LOC6650980"/>
</dbReference>
<dbReference type="GeneID" id="6650980"/>
<dbReference type="KEGG" id="dwi:6650980"/>
<dbReference type="CTD" id="41973"/>
<dbReference type="eggNOG" id="KOG2054">
    <property type="taxonomic scope" value="Eukaryota"/>
</dbReference>
<dbReference type="HOGENOM" id="CLU_003502_0_1_1"/>
<dbReference type="OMA" id="NPHGGKE"/>
<dbReference type="OrthoDB" id="10251401at2759"/>
<dbReference type="PhylomeDB" id="B4NIM9"/>
<dbReference type="Proteomes" id="UP000007798">
    <property type="component" value="Unassembled WGS sequence"/>
</dbReference>
<dbReference type="GO" id="GO:0000794">
    <property type="term" value="C:condensed nuclear chromosome"/>
    <property type="evidence" value="ECO:0000250"/>
    <property type="project" value="UniProtKB"/>
</dbReference>
<dbReference type="GO" id="GO:0032545">
    <property type="term" value="C:CURI complex"/>
    <property type="evidence" value="ECO:0007669"/>
    <property type="project" value="TreeGrafter"/>
</dbReference>
<dbReference type="GO" id="GO:0032040">
    <property type="term" value="C:small-subunit processome"/>
    <property type="evidence" value="ECO:0000250"/>
    <property type="project" value="UniProtKB"/>
</dbReference>
<dbReference type="GO" id="GO:0034456">
    <property type="term" value="C:UTP-C complex"/>
    <property type="evidence" value="ECO:0007669"/>
    <property type="project" value="TreeGrafter"/>
</dbReference>
<dbReference type="GO" id="GO:0003723">
    <property type="term" value="F:RNA binding"/>
    <property type="evidence" value="ECO:0007669"/>
    <property type="project" value="UniProtKB-KW"/>
</dbReference>
<dbReference type="GO" id="GO:0042274">
    <property type="term" value="P:ribosomal small subunit biogenesis"/>
    <property type="evidence" value="ECO:0000250"/>
    <property type="project" value="UniProtKB"/>
</dbReference>
<dbReference type="GO" id="GO:0006364">
    <property type="term" value="P:rRNA processing"/>
    <property type="evidence" value="ECO:0007669"/>
    <property type="project" value="TreeGrafter"/>
</dbReference>
<dbReference type="GO" id="GO:0006409">
    <property type="term" value="P:tRNA export from nucleus"/>
    <property type="evidence" value="ECO:0007669"/>
    <property type="project" value="TreeGrafter"/>
</dbReference>
<dbReference type="FunFam" id="1.10.1410.10:FF:000005">
    <property type="entry name" value="Nucleolar protein 6"/>
    <property type="match status" value="1"/>
</dbReference>
<dbReference type="FunFam" id="1.10.1410.10:FF:000006">
    <property type="entry name" value="Nucleolar protein 6"/>
    <property type="match status" value="1"/>
</dbReference>
<dbReference type="FunFam" id="3.30.70.3030:FF:000008">
    <property type="entry name" value="Nucleolar protein 6"/>
    <property type="match status" value="1"/>
</dbReference>
<dbReference type="Gene3D" id="1.10.1410.10">
    <property type="match status" value="2"/>
</dbReference>
<dbReference type="Gene3D" id="3.30.70.3030">
    <property type="match status" value="1"/>
</dbReference>
<dbReference type="InterPro" id="IPR005554">
    <property type="entry name" value="NOL6/Upt22"/>
</dbReference>
<dbReference type="InterPro" id="IPR035082">
    <property type="entry name" value="Nrap_D1"/>
</dbReference>
<dbReference type="InterPro" id="IPR035367">
    <property type="entry name" value="Nrap_D2"/>
</dbReference>
<dbReference type="InterPro" id="IPR035368">
    <property type="entry name" value="Nrap_D3"/>
</dbReference>
<dbReference type="InterPro" id="IPR035369">
    <property type="entry name" value="Nrap_D4"/>
</dbReference>
<dbReference type="InterPro" id="IPR035370">
    <property type="entry name" value="Nrap_D5"/>
</dbReference>
<dbReference type="InterPro" id="IPR035371">
    <property type="entry name" value="Nrap_D6"/>
</dbReference>
<dbReference type="PANTHER" id="PTHR17972:SF0">
    <property type="entry name" value="NUCLEOLAR PROTEIN 6"/>
    <property type="match status" value="1"/>
</dbReference>
<dbReference type="PANTHER" id="PTHR17972">
    <property type="entry name" value="NUCLEOLAR RNA-ASSOCIATED PROTEIN"/>
    <property type="match status" value="1"/>
</dbReference>
<dbReference type="Pfam" id="PF03813">
    <property type="entry name" value="Nrap"/>
    <property type="match status" value="1"/>
</dbReference>
<dbReference type="Pfam" id="PF17403">
    <property type="entry name" value="Nrap_D2"/>
    <property type="match status" value="1"/>
</dbReference>
<dbReference type="Pfam" id="PF17404">
    <property type="entry name" value="Nrap_D3"/>
    <property type="match status" value="1"/>
</dbReference>
<dbReference type="Pfam" id="PF17405">
    <property type="entry name" value="Nrap_D4"/>
    <property type="match status" value="1"/>
</dbReference>
<dbReference type="Pfam" id="PF17406">
    <property type="entry name" value="Nrap_D5"/>
    <property type="match status" value="1"/>
</dbReference>
<dbReference type="Pfam" id="PF17407">
    <property type="entry name" value="Nrap_D6"/>
    <property type="match status" value="1"/>
</dbReference>
<reference evidence="6" key="1">
    <citation type="journal article" date="2007" name="Nature">
        <title>Evolution of genes and genomes on the Drosophila phylogeny.</title>
        <authorList>
            <consortium name="Drosophila 12 genomes consortium"/>
        </authorList>
    </citation>
    <scope>NUCLEOTIDE SEQUENCE [LARGE SCALE GENOMIC DNA]</scope>
    <source>
        <strain evidence="6">Tucson 14030-0811.24</strain>
    </source>
</reference>
<proteinExistence type="inferred from homology"/>
<feature type="chain" id="PRO_0000383631" description="Nucleolar protein 6">
    <location>
        <begin position="1"/>
        <end position="1202"/>
    </location>
</feature>
<feature type="region of interest" description="Disordered" evidence="5">
    <location>
        <begin position="1"/>
        <end position="64"/>
    </location>
</feature>
<protein>
    <recommendedName>
        <fullName evidence="3">Nucleolar protein 6</fullName>
    </recommendedName>
    <alternativeName>
        <fullName evidence="1">Maternal transcript 89Ba</fullName>
    </alternativeName>
</protein>
<keyword id="KW-0158">Chromosome</keyword>
<keyword id="KW-0539">Nucleus</keyword>
<keyword id="KW-1185">Reference proteome</keyword>
<keyword id="KW-0694">RNA-binding</keyword>
<sequence length="1202" mass="138370">MNKTKRKQQSNKVALKRDYKSDSDSDGDADALSTNDGFVEPEQKPIISKPPQKKKKYKDNETNKVKPPTIEEMKELRDTRNLFHSNLFKLQVKEMLEELHLKSKYTDYIDKWLENFTTFTEQLEDGLMDRCQLEVPLHLHKKTINFIFSKPEQPPQLIGAASQGTLLQPNFIVDIALEMPKKCFEKDDYLNLIYDQKRALYLAYVTDKMKSSSIYREDQFAYNYYANNPLKPVLELTPFAKIGKHLKFRLFITAPVETFRLGRFVPSNNNIRPILFNDEWNLEEQPLPSTQHYNANVLFDLTLSANQSLLNKSFQGRRNFQDGLLLLKVWLRQRQLDVGFSGFSSYILAMYIVHLNQQRVLHQSSSSYQVARTVWNQLANSDWTKGISLAQQATQEQLSFVVGFYDVCFMDITGHYNLCSNVPLAVYKRVREEAKLAVDLLNDMKINSFSYIFMQKCPLYTRVDNILKITKATSVQQLLLLQNHTEMKYDYANYGYPQMLKTLTDLLEKGLAQRIHGIIPLETAVSPWSVDSKAPIIGQSIQLGLILNPEHAYEVLDRGPASQDDDEGAAEFRSFWGDKSNLRRFQDGSICEAVVWAAVKDSPAKKRLIVKDICLHLLEHHFKLDKDDVQFIANELDIVYKLSPWFKVNKLMDKTKMKEELDQNTDSEALTPNVIRCYDELSRQLHGLNDLPLEIVSISGVSPIFRYCESQPVLPQTRLLANRRIHTNHVLRVVIQLGQSGKWPNELAALRALKTAFLIEIGEKLKEQCHLNWSLTSEGLLIIKRGYCFLIELAHSKESALLKQQINERGITTYVDNPQSRDLERRHYILPKVSGALHSLHQSHSAYGPTVLIAKQWLASQLIDDGLWSPMATELLVAYLYQQRHAPFITAAPQTGFIRLLQLMSLSDWQGELFLLNFNNSWEDQQIADLEHSFRSDRESYPPLALATSYDQQHAGRLWTTDETPNRLVLNHVSKLARHALELIETNLMSKSLQFLRPAQLFRASNEGYDLVIQLKPELLANSLNYDMGSPFVDFGQPNFNLPLAGQDRLAHIVAHLRSAYSDYAAFFYKPHGGKELAIMWKPPNVFAPKAFKVNELQASTPCVGNRNQVQVSRDTLLEDFKLLLKDFYARICTTEDLKREQKQHSKPKRYFQINPKQFENESMKPKKQIHKPTKAKTKTINTKKLKGKKILLKSKPIKALV</sequence>
<evidence type="ECO:0000250" key="1">
    <source>
        <dbReference type="UniProtKB" id="Q8IH00"/>
    </source>
</evidence>
<evidence type="ECO:0000250" key="2">
    <source>
        <dbReference type="UniProtKB" id="Q8R5K4"/>
    </source>
</evidence>
<evidence type="ECO:0000250" key="3">
    <source>
        <dbReference type="UniProtKB" id="Q9H6R4"/>
    </source>
</evidence>
<evidence type="ECO:0000255" key="4"/>
<evidence type="ECO:0000256" key="5">
    <source>
        <dbReference type="SAM" id="MobiDB-lite"/>
    </source>
</evidence>
<evidence type="ECO:0000312" key="6">
    <source>
        <dbReference type="EMBL" id="EDW83743.1"/>
    </source>
</evidence>
<comment type="function">
    <text evidence="3">Part of the small subunit (SSU) processome, first precursor of the small eukaryotic ribosomal subunit. During the assembly of the SSU processome in the nucleolus, many ribosome biogenesis factors, an RNA chaperone and ribosomal proteins associate with the nascent pre-rRNA and work in concert to generate RNA folding, modifications, rearrangements and cleavage as well as targeted degradation of pre-ribosomal RNA by the RNA exosome.</text>
</comment>
<comment type="subunit">
    <text evidence="3">Part of the small subunit (SSU) processome, composed of more than 70 proteins and the RNA chaperone small nucleolar RNA (snoRNA) U3.</text>
</comment>
<comment type="subcellular location">
    <subcellularLocation>
        <location evidence="3">Nucleus</location>
        <location evidence="3">Nucleolus</location>
    </subcellularLocation>
    <subcellularLocation>
        <location evidence="2">Chromosome</location>
    </subcellularLocation>
    <text evidence="2">Localizes to condensed chromosomes in mitosis.</text>
</comment>
<comment type="similarity">
    <text evidence="4">Belongs to the NRAP family.</text>
</comment>
<accession>B4NIM9</accession>
<gene>
    <name evidence="1" type="primary">Mat89Ba</name>
    <name type="ORF">GK13513</name>
</gene>